<dbReference type="EC" id="2.6.1.9" evidence="1"/>
<dbReference type="EMBL" id="CP000308">
    <property type="protein sequence ID" value="ABG12811.1"/>
    <property type="molecule type" value="Genomic_DNA"/>
</dbReference>
<dbReference type="RefSeq" id="WP_002211894.1">
    <property type="nucleotide sequence ID" value="NZ_CP009906.1"/>
</dbReference>
<dbReference type="SMR" id="Q1C9R1"/>
<dbReference type="GeneID" id="57977021"/>
<dbReference type="KEGG" id="ypa:YPA_0843"/>
<dbReference type="UniPathway" id="UPA00031">
    <property type="reaction ID" value="UER00012"/>
</dbReference>
<dbReference type="Proteomes" id="UP000001971">
    <property type="component" value="Chromosome"/>
</dbReference>
<dbReference type="GO" id="GO:0004400">
    <property type="term" value="F:histidinol-phosphate transaminase activity"/>
    <property type="evidence" value="ECO:0007669"/>
    <property type="project" value="UniProtKB-UniRule"/>
</dbReference>
<dbReference type="GO" id="GO:0030170">
    <property type="term" value="F:pyridoxal phosphate binding"/>
    <property type="evidence" value="ECO:0007669"/>
    <property type="project" value="InterPro"/>
</dbReference>
<dbReference type="GO" id="GO:0000105">
    <property type="term" value="P:L-histidine biosynthetic process"/>
    <property type="evidence" value="ECO:0007669"/>
    <property type="project" value="UniProtKB-UniRule"/>
</dbReference>
<dbReference type="CDD" id="cd00609">
    <property type="entry name" value="AAT_like"/>
    <property type="match status" value="1"/>
</dbReference>
<dbReference type="Gene3D" id="3.90.1150.10">
    <property type="entry name" value="Aspartate Aminotransferase, domain 1"/>
    <property type="match status" value="1"/>
</dbReference>
<dbReference type="Gene3D" id="3.40.640.10">
    <property type="entry name" value="Type I PLP-dependent aspartate aminotransferase-like (Major domain)"/>
    <property type="match status" value="1"/>
</dbReference>
<dbReference type="HAMAP" id="MF_01023">
    <property type="entry name" value="HisC_aminotrans_2"/>
    <property type="match status" value="1"/>
</dbReference>
<dbReference type="InterPro" id="IPR001917">
    <property type="entry name" value="Aminotrans_II_pyridoxalP_BS"/>
</dbReference>
<dbReference type="InterPro" id="IPR004839">
    <property type="entry name" value="Aminotransferase_I/II_large"/>
</dbReference>
<dbReference type="InterPro" id="IPR005861">
    <property type="entry name" value="HisP_aminotrans"/>
</dbReference>
<dbReference type="InterPro" id="IPR015424">
    <property type="entry name" value="PyrdxlP-dep_Trfase"/>
</dbReference>
<dbReference type="InterPro" id="IPR015421">
    <property type="entry name" value="PyrdxlP-dep_Trfase_major"/>
</dbReference>
<dbReference type="InterPro" id="IPR015422">
    <property type="entry name" value="PyrdxlP-dep_Trfase_small"/>
</dbReference>
<dbReference type="NCBIfam" id="TIGR01141">
    <property type="entry name" value="hisC"/>
    <property type="match status" value="1"/>
</dbReference>
<dbReference type="PANTHER" id="PTHR42885:SF2">
    <property type="entry name" value="HISTIDINOL-PHOSPHATE AMINOTRANSFERASE"/>
    <property type="match status" value="1"/>
</dbReference>
<dbReference type="PANTHER" id="PTHR42885">
    <property type="entry name" value="HISTIDINOL-PHOSPHATE AMINOTRANSFERASE-RELATED"/>
    <property type="match status" value="1"/>
</dbReference>
<dbReference type="Pfam" id="PF00155">
    <property type="entry name" value="Aminotran_1_2"/>
    <property type="match status" value="1"/>
</dbReference>
<dbReference type="SUPFAM" id="SSF53383">
    <property type="entry name" value="PLP-dependent transferases"/>
    <property type="match status" value="1"/>
</dbReference>
<dbReference type="PROSITE" id="PS00599">
    <property type="entry name" value="AA_TRANSFER_CLASS_2"/>
    <property type="match status" value="1"/>
</dbReference>
<evidence type="ECO:0000255" key="1">
    <source>
        <dbReference type="HAMAP-Rule" id="MF_01023"/>
    </source>
</evidence>
<evidence type="ECO:0000256" key="2">
    <source>
        <dbReference type="SAM" id="MobiDB-lite"/>
    </source>
</evidence>
<comment type="catalytic activity">
    <reaction evidence="1">
        <text>L-histidinol phosphate + 2-oxoglutarate = 3-(imidazol-4-yl)-2-oxopropyl phosphate + L-glutamate</text>
        <dbReference type="Rhea" id="RHEA:23744"/>
        <dbReference type="ChEBI" id="CHEBI:16810"/>
        <dbReference type="ChEBI" id="CHEBI:29985"/>
        <dbReference type="ChEBI" id="CHEBI:57766"/>
        <dbReference type="ChEBI" id="CHEBI:57980"/>
        <dbReference type="EC" id="2.6.1.9"/>
    </reaction>
</comment>
<comment type="cofactor">
    <cofactor evidence="1">
        <name>pyridoxal 5'-phosphate</name>
        <dbReference type="ChEBI" id="CHEBI:597326"/>
    </cofactor>
</comment>
<comment type="pathway">
    <text evidence="1">Amino-acid biosynthesis; L-histidine biosynthesis; L-histidine from 5-phospho-alpha-D-ribose 1-diphosphate: step 7/9.</text>
</comment>
<comment type="subunit">
    <text evidence="1">Homodimer.</text>
</comment>
<comment type="similarity">
    <text evidence="1">Belongs to the class-II pyridoxal-phosphate-dependent aminotransferase family. Histidinol-phosphate aminotransferase subfamily.</text>
</comment>
<organism>
    <name type="scientific">Yersinia pestis bv. Antiqua (strain Antiqua)</name>
    <dbReference type="NCBI Taxonomy" id="360102"/>
    <lineage>
        <taxon>Bacteria</taxon>
        <taxon>Pseudomonadati</taxon>
        <taxon>Pseudomonadota</taxon>
        <taxon>Gammaproteobacteria</taxon>
        <taxon>Enterobacterales</taxon>
        <taxon>Yersiniaceae</taxon>
        <taxon>Yersinia</taxon>
    </lineage>
</organism>
<name>HIS8_YERPA</name>
<sequence>MSQSNNVTDLARANIRALTPYMSARRLGGNGDVWLNANEYPLGTEYQLTTQTFNRYPECQPKHVIERYAAYAGLPPEQVLVSRGADEGIELLIRAFCEPGQDAILFCPPTYGMYAVSAETFGVERRTVPAQADWQLDLPAIANNLEQVKVIYVCSPNNPTGNLINPADLQAVLALAQGRAIVAIDEAYIEFCPQASVSNWLKDYPNLVILRTLSKAFALAGLRCGFTLANSDIIQLLLKVIAPYPLSTPVADIAAQALSPKGIEQMRQRVSEVRANRAWLQSALQDCACVEQVFTSESNYLLARFTASSSVFNALWDQGIILRDQNKQPGLANCLRITIGTRQECERVIAALAPLPGIDNSNNIDNQNKTYSQTSSIRKGTI</sequence>
<proteinExistence type="inferred from homology"/>
<reference key="1">
    <citation type="journal article" date="2006" name="J. Bacteriol.">
        <title>Complete genome sequence of Yersinia pestis strains Antiqua and Nepal516: evidence of gene reduction in an emerging pathogen.</title>
        <authorList>
            <person name="Chain P.S.G."/>
            <person name="Hu P."/>
            <person name="Malfatti S.A."/>
            <person name="Radnedge L."/>
            <person name="Larimer F."/>
            <person name="Vergez L.M."/>
            <person name="Worsham P."/>
            <person name="Chu M.C."/>
            <person name="Andersen G.L."/>
        </authorList>
    </citation>
    <scope>NUCLEOTIDE SEQUENCE [LARGE SCALE GENOMIC DNA]</scope>
    <source>
        <strain>Antiqua</strain>
    </source>
</reference>
<accession>Q1C9R1</accession>
<gene>
    <name evidence="1" type="primary">hisC</name>
    <name type="ordered locus">YPA_0843</name>
</gene>
<keyword id="KW-0028">Amino-acid biosynthesis</keyword>
<keyword id="KW-0032">Aminotransferase</keyword>
<keyword id="KW-0368">Histidine biosynthesis</keyword>
<keyword id="KW-0663">Pyridoxal phosphate</keyword>
<keyword id="KW-0808">Transferase</keyword>
<feature type="chain" id="PRO_1000063513" description="Histidinol-phosphate aminotransferase">
    <location>
        <begin position="1"/>
        <end position="382"/>
    </location>
</feature>
<feature type="region of interest" description="Disordered" evidence="2">
    <location>
        <begin position="363"/>
        <end position="382"/>
    </location>
</feature>
<feature type="modified residue" description="N6-(pyridoxal phosphate)lysine" evidence="1">
    <location>
        <position position="215"/>
    </location>
</feature>
<protein>
    <recommendedName>
        <fullName evidence="1">Histidinol-phosphate aminotransferase</fullName>
        <ecNumber evidence="1">2.6.1.9</ecNumber>
    </recommendedName>
    <alternativeName>
        <fullName evidence="1">Imidazole acetol-phosphate transaminase</fullName>
    </alternativeName>
</protein>